<gene>
    <name evidence="1" type="primary">rpmB</name>
    <name type="ordered locus">Teth514_1744</name>
</gene>
<accession>B0K1Y2</accession>
<keyword id="KW-0687">Ribonucleoprotein</keyword>
<keyword id="KW-0689">Ribosomal protein</keyword>
<sequence>MLKCDICGKGPLAGYQYSHSHRKSIRKWKPNIKKVRAIVDGTPVRLHVCTKCLKAGKVQRAL</sequence>
<protein>
    <recommendedName>
        <fullName evidence="1">Large ribosomal subunit protein bL28</fullName>
    </recommendedName>
    <alternativeName>
        <fullName evidence="2">50S ribosomal protein L28</fullName>
    </alternativeName>
</protein>
<organism>
    <name type="scientific">Thermoanaerobacter sp. (strain X514)</name>
    <dbReference type="NCBI Taxonomy" id="399726"/>
    <lineage>
        <taxon>Bacteria</taxon>
        <taxon>Bacillati</taxon>
        <taxon>Bacillota</taxon>
        <taxon>Clostridia</taxon>
        <taxon>Thermoanaerobacterales</taxon>
        <taxon>Thermoanaerobacteraceae</taxon>
        <taxon>Thermoanaerobacter</taxon>
    </lineage>
</organism>
<comment type="similarity">
    <text evidence="1">Belongs to the bacterial ribosomal protein bL28 family.</text>
</comment>
<feature type="chain" id="PRO_1000121702" description="Large ribosomal subunit protein bL28">
    <location>
        <begin position="1"/>
        <end position="62"/>
    </location>
</feature>
<dbReference type="EMBL" id="CP000923">
    <property type="protein sequence ID" value="ABY93030.1"/>
    <property type="molecule type" value="Genomic_DNA"/>
</dbReference>
<dbReference type="RefSeq" id="WP_003868220.1">
    <property type="nucleotide sequence ID" value="NC_010320.1"/>
</dbReference>
<dbReference type="SMR" id="B0K1Y2"/>
<dbReference type="KEGG" id="tex:Teth514_1744"/>
<dbReference type="HOGENOM" id="CLU_064548_7_0_9"/>
<dbReference type="Proteomes" id="UP000002155">
    <property type="component" value="Chromosome"/>
</dbReference>
<dbReference type="GO" id="GO:1990904">
    <property type="term" value="C:ribonucleoprotein complex"/>
    <property type="evidence" value="ECO:0007669"/>
    <property type="project" value="UniProtKB-KW"/>
</dbReference>
<dbReference type="GO" id="GO:0005840">
    <property type="term" value="C:ribosome"/>
    <property type="evidence" value="ECO:0007669"/>
    <property type="project" value="UniProtKB-KW"/>
</dbReference>
<dbReference type="GO" id="GO:0003735">
    <property type="term" value="F:structural constituent of ribosome"/>
    <property type="evidence" value="ECO:0007669"/>
    <property type="project" value="InterPro"/>
</dbReference>
<dbReference type="GO" id="GO:0006412">
    <property type="term" value="P:translation"/>
    <property type="evidence" value="ECO:0007669"/>
    <property type="project" value="UniProtKB-UniRule"/>
</dbReference>
<dbReference type="Gene3D" id="2.30.170.40">
    <property type="entry name" value="Ribosomal protein L28/L24"/>
    <property type="match status" value="1"/>
</dbReference>
<dbReference type="HAMAP" id="MF_00373">
    <property type="entry name" value="Ribosomal_bL28"/>
    <property type="match status" value="1"/>
</dbReference>
<dbReference type="InterPro" id="IPR050096">
    <property type="entry name" value="Bacterial_rp_bL28"/>
</dbReference>
<dbReference type="InterPro" id="IPR026569">
    <property type="entry name" value="Ribosomal_bL28"/>
</dbReference>
<dbReference type="InterPro" id="IPR034704">
    <property type="entry name" value="Ribosomal_bL28/bL31-like_sf"/>
</dbReference>
<dbReference type="InterPro" id="IPR001383">
    <property type="entry name" value="Ribosomal_bL28_bact-type"/>
</dbReference>
<dbReference type="InterPro" id="IPR037147">
    <property type="entry name" value="Ribosomal_bL28_sf"/>
</dbReference>
<dbReference type="NCBIfam" id="TIGR00009">
    <property type="entry name" value="L28"/>
    <property type="match status" value="1"/>
</dbReference>
<dbReference type="PANTHER" id="PTHR39080">
    <property type="entry name" value="50S RIBOSOMAL PROTEIN L28"/>
    <property type="match status" value="1"/>
</dbReference>
<dbReference type="PANTHER" id="PTHR39080:SF1">
    <property type="entry name" value="LARGE RIBOSOMAL SUBUNIT PROTEIN BL28A"/>
    <property type="match status" value="1"/>
</dbReference>
<dbReference type="Pfam" id="PF00830">
    <property type="entry name" value="Ribosomal_L28"/>
    <property type="match status" value="1"/>
</dbReference>
<dbReference type="SUPFAM" id="SSF143800">
    <property type="entry name" value="L28p-like"/>
    <property type="match status" value="1"/>
</dbReference>
<name>RL28_THEPX</name>
<reference key="1">
    <citation type="submission" date="2008-01" db="EMBL/GenBank/DDBJ databases">
        <title>Complete sequence of Thermoanaerobacter sp. X514.</title>
        <authorList>
            <consortium name="US DOE Joint Genome Institute"/>
            <person name="Copeland A."/>
            <person name="Lucas S."/>
            <person name="Lapidus A."/>
            <person name="Barry K."/>
            <person name="Glavina del Rio T."/>
            <person name="Dalin E."/>
            <person name="Tice H."/>
            <person name="Pitluck S."/>
            <person name="Bruce D."/>
            <person name="Goodwin L."/>
            <person name="Saunders E."/>
            <person name="Brettin T."/>
            <person name="Detter J.C."/>
            <person name="Han C."/>
            <person name="Schmutz J."/>
            <person name="Larimer F."/>
            <person name="Land M."/>
            <person name="Hauser L."/>
            <person name="Kyrpides N."/>
            <person name="Kim E."/>
            <person name="Hemme C."/>
            <person name="Fields M.W."/>
            <person name="He Z."/>
            <person name="Zhou J."/>
            <person name="Richardson P."/>
        </authorList>
    </citation>
    <scope>NUCLEOTIDE SEQUENCE [LARGE SCALE GENOMIC DNA]</scope>
    <source>
        <strain>X514</strain>
    </source>
</reference>
<evidence type="ECO:0000255" key="1">
    <source>
        <dbReference type="HAMAP-Rule" id="MF_00373"/>
    </source>
</evidence>
<evidence type="ECO:0000305" key="2"/>
<proteinExistence type="inferred from homology"/>